<name>CLPP_LIGS1</name>
<organism>
    <name type="scientific">Ligilactobacillus salivarius (strain UCC118)</name>
    <name type="common">Lactobacillus salivarius</name>
    <dbReference type="NCBI Taxonomy" id="362948"/>
    <lineage>
        <taxon>Bacteria</taxon>
        <taxon>Bacillati</taxon>
        <taxon>Bacillota</taxon>
        <taxon>Bacilli</taxon>
        <taxon>Lactobacillales</taxon>
        <taxon>Lactobacillaceae</taxon>
        <taxon>Ligilactobacillus</taxon>
    </lineage>
</organism>
<comment type="function">
    <text evidence="1">Cleaves peptides in various proteins in a process that requires ATP hydrolysis. Has a chymotrypsin-like activity. Plays a major role in the degradation of misfolded proteins.</text>
</comment>
<comment type="catalytic activity">
    <reaction evidence="1">
        <text>Hydrolysis of proteins to small peptides in the presence of ATP and magnesium. alpha-casein is the usual test substrate. In the absence of ATP, only oligopeptides shorter than five residues are hydrolyzed (such as succinyl-Leu-Tyr-|-NHMec, and Leu-Tyr-Leu-|-Tyr-Trp, in which cleavage of the -Tyr-|-Leu- and -Tyr-|-Trp bonds also occurs).</text>
        <dbReference type="EC" id="3.4.21.92"/>
    </reaction>
</comment>
<comment type="subunit">
    <text evidence="1">Fourteen ClpP subunits assemble into 2 heptameric rings which stack back to back to give a disk-like structure with a central cavity, resembling the structure of eukaryotic proteasomes.</text>
</comment>
<comment type="subcellular location">
    <subcellularLocation>
        <location evidence="1">Cytoplasm</location>
    </subcellularLocation>
</comment>
<comment type="similarity">
    <text evidence="1">Belongs to the peptidase S14 family.</text>
</comment>
<proteinExistence type="inferred from homology"/>
<evidence type="ECO:0000255" key="1">
    <source>
        <dbReference type="HAMAP-Rule" id="MF_00444"/>
    </source>
</evidence>
<accession>Q1WTA8</accession>
<protein>
    <recommendedName>
        <fullName evidence="1">ATP-dependent Clp protease proteolytic subunit</fullName>
        <ecNumber evidence="1">3.4.21.92</ecNumber>
    </recommendedName>
    <alternativeName>
        <fullName evidence="1">Endopeptidase Clp</fullName>
    </alternativeName>
</protein>
<sequence>MNLVPTVIEQSSQGERAYDIYSRLLKDRIIMVSGEVNDDMANAIIAQLLFLDAQDSEKDIYMYINSPGGSVSAGLAIYDTMNFVNADVQTIVMGMAASMASVLATAGTKGKRFALPNSEIMIHQPLGGAQGQSTEIQIAAEHILKTRKLINQILADGSGQDIETINKDTERDNFMTAQQAVDYGLIDGIMKNKKKIK</sequence>
<feature type="chain" id="PRO_0000252823" description="ATP-dependent Clp protease proteolytic subunit">
    <location>
        <begin position="1"/>
        <end position="197"/>
    </location>
</feature>
<feature type="active site" description="Nucleophile" evidence="1">
    <location>
        <position position="98"/>
    </location>
</feature>
<feature type="active site" evidence="1">
    <location>
        <position position="123"/>
    </location>
</feature>
<gene>
    <name evidence="1" type="primary">clpP</name>
    <name type="ordered locus">LSL_1168</name>
</gene>
<reference key="1">
    <citation type="journal article" date="2006" name="Proc. Natl. Acad. Sci. U.S.A.">
        <title>Multireplicon genome architecture of Lactobacillus salivarius.</title>
        <authorList>
            <person name="Claesson M.J."/>
            <person name="Li Y."/>
            <person name="Leahy S."/>
            <person name="Canchaya C."/>
            <person name="van Pijkeren J.P."/>
            <person name="Cerdeno-Tarraga A.M."/>
            <person name="Parkhill J."/>
            <person name="Flynn S."/>
            <person name="O'Sullivan G.C."/>
            <person name="Collins J.K."/>
            <person name="Higgins D."/>
            <person name="Shanahan F."/>
            <person name="Fitzgerald G.F."/>
            <person name="van Sinderen D."/>
            <person name="O'Toole P.W."/>
        </authorList>
    </citation>
    <scope>NUCLEOTIDE SEQUENCE [LARGE SCALE GENOMIC DNA]</scope>
    <source>
        <strain>UCC118</strain>
    </source>
</reference>
<dbReference type="EC" id="3.4.21.92" evidence="1"/>
<dbReference type="EMBL" id="CP000233">
    <property type="protein sequence ID" value="ABD99976.1"/>
    <property type="molecule type" value="Genomic_DNA"/>
</dbReference>
<dbReference type="RefSeq" id="WP_003700621.1">
    <property type="nucleotide sequence ID" value="NC_007929.1"/>
</dbReference>
<dbReference type="RefSeq" id="YP_536059.1">
    <property type="nucleotide sequence ID" value="NC_007929.1"/>
</dbReference>
<dbReference type="SMR" id="Q1WTA8"/>
<dbReference type="STRING" id="362948.LSL_1168"/>
<dbReference type="MEROPS" id="S14.001"/>
<dbReference type="GeneID" id="89465914"/>
<dbReference type="KEGG" id="lsl:LSL_1168"/>
<dbReference type="PATRIC" id="fig|362948.14.peg.1242"/>
<dbReference type="HOGENOM" id="CLU_058707_3_2_9"/>
<dbReference type="OrthoDB" id="9802800at2"/>
<dbReference type="Proteomes" id="UP000006559">
    <property type="component" value="Chromosome"/>
</dbReference>
<dbReference type="GO" id="GO:0005737">
    <property type="term" value="C:cytoplasm"/>
    <property type="evidence" value="ECO:0007669"/>
    <property type="project" value="UniProtKB-SubCell"/>
</dbReference>
<dbReference type="GO" id="GO:0009368">
    <property type="term" value="C:endopeptidase Clp complex"/>
    <property type="evidence" value="ECO:0007669"/>
    <property type="project" value="TreeGrafter"/>
</dbReference>
<dbReference type="GO" id="GO:0004176">
    <property type="term" value="F:ATP-dependent peptidase activity"/>
    <property type="evidence" value="ECO:0007669"/>
    <property type="project" value="InterPro"/>
</dbReference>
<dbReference type="GO" id="GO:0051117">
    <property type="term" value="F:ATPase binding"/>
    <property type="evidence" value="ECO:0007669"/>
    <property type="project" value="TreeGrafter"/>
</dbReference>
<dbReference type="GO" id="GO:0004252">
    <property type="term" value="F:serine-type endopeptidase activity"/>
    <property type="evidence" value="ECO:0007669"/>
    <property type="project" value="UniProtKB-UniRule"/>
</dbReference>
<dbReference type="GO" id="GO:0006515">
    <property type="term" value="P:protein quality control for misfolded or incompletely synthesized proteins"/>
    <property type="evidence" value="ECO:0007669"/>
    <property type="project" value="TreeGrafter"/>
</dbReference>
<dbReference type="CDD" id="cd07017">
    <property type="entry name" value="S14_ClpP_2"/>
    <property type="match status" value="1"/>
</dbReference>
<dbReference type="FunFam" id="3.90.226.10:FF:000001">
    <property type="entry name" value="ATP-dependent Clp protease proteolytic subunit"/>
    <property type="match status" value="1"/>
</dbReference>
<dbReference type="Gene3D" id="3.90.226.10">
    <property type="entry name" value="2-enoyl-CoA Hydratase, Chain A, domain 1"/>
    <property type="match status" value="1"/>
</dbReference>
<dbReference type="HAMAP" id="MF_00444">
    <property type="entry name" value="ClpP"/>
    <property type="match status" value="1"/>
</dbReference>
<dbReference type="InterPro" id="IPR001907">
    <property type="entry name" value="ClpP"/>
</dbReference>
<dbReference type="InterPro" id="IPR029045">
    <property type="entry name" value="ClpP/crotonase-like_dom_sf"/>
</dbReference>
<dbReference type="InterPro" id="IPR023562">
    <property type="entry name" value="ClpP/TepA"/>
</dbReference>
<dbReference type="InterPro" id="IPR033135">
    <property type="entry name" value="ClpP_His_AS"/>
</dbReference>
<dbReference type="InterPro" id="IPR018215">
    <property type="entry name" value="ClpP_Ser_AS"/>
</dbReference>
<dbReference type="NCBIfam" id="TIGR00493">
    <property type="entry name" value="clpP"/>
    <property type="match status" value="1"/>
</dbReference>
<dbReference type="NCBIfam" id="NF001368">
    <property type="entry name" value="PRK00277.1"/>
    <property type="match status" value="1"/>
</dbReference>
<dbReference type="NCBIfam" id="NF009205">
    <property type="entry name" value="PRK12553.1"/>
    <property type="match status" value="1"/>
</dbReference>
<dbReference type="PANTHER" id="PTHR10381">
    <property type="entry name" value="ATP-DEPENDENT CLP PROTEASE PROTEOLYTIC SUBUNIT"/>
    <property type="match status" value="1"/>
</dbReference>
<dbReference type="PANTHER" id="PTHR10381:SF70">
    <property type="entry name" value="ATP-DEPENDENT CLP PROTEASE PROTEOLYTIC SUBUNIT"/>
    <property type="match status" value="1"/>
</dbReference>
<dbReference type="Pfam" id="PF00574">
    <property type="entry name" value="CLP_protease"/>
    <property type="match status" value="1"/>
</dbReference>
<dbReference type="PRINTS" id="PR00127">
    <property type="entry name" value="CLPPROTEASEP"/>
</dbReference>
<dbReference type="SUPFAM" id="SSF52096">
    <property type="entry name" value="ClpP/crotonase"/>
    <property type="match status" value="1"/>
</dbReference>
<dbReference type="PROSITE" id="PS00382">
    <property type="entry name" value="CLP_PROTEASE_HIS"/>
    <property type="match status" value="1"/>
</dbReference>
<dbReference type="PROSITE" id="PS00381">
    <property type="entry name" value="CLP_PROTEASE_SER"/>
    <property type="match status" value="1"/>
</dbReference>
<keyword id="KW-0963">Cytoplasm</keyword>
<keyword id="KW-0378">Hydrolase</keyword>
<keyword id="KW-0645">Protease</keyword>
<keyword id="KW-1185">Reference proteome</keyword>
<keyword id="KW-0720">Serine protease</keyword>